<comment type="function">
    <text evidence="1">CIPK serine-threonine protein kinases interact with CBL proteins. Binding of a CBL protein to the regulatory NAF domain of CIPK protein lead to the activation of the kinase in a calcium-dependent manner (By similarity).</text>
</comment>
<comment type="catalytic activity">
    <reaction>
        <text>L-seryl-[protein] + ATP = O-phospho-L-seryl-[protein] + ADP + H(+)</text>
        <dbReference type="Rhea" id="RHEA:17989"/>
        <dbReference type="Rhea" id="RHEA-COMP:9863"/>
        <dbReference type="Rhea" id="RHEA-COMP:11604"/>
        <dbReference type="ChEBI" id="CHEBI:15378"/>
        <dbReference type="ChEBI" id="CHEBI:29999"/>
        <dbReference type="ChEBI" id="CHEBI:30616"/>
        <dbReference type="ChEBI" id="CHEBI:83421"/>
        <dbReference type="ChEBI" id="CHEBI:456216"/>
        <dbReference type="EC" id="2.7.11.1"/>
    </reaction>
</comment>
<comment type="catalytic activity">
    <reaction>
        <text>L-threonyl-[protein] + ATP = O-phospho-L-threonyl-[protein] + ADP + H(+)</text>
        <dbReference type="Rhea" id="RHEA:46608"/>
        <dbReference type="Rhea" id="RHEA-COMP:11060"/>
        <dbReference type="Rhea" id="RHEA-COMP:11605"/>
        <dbReference type="ChEBI" id="CHEBI:15378"/>
        <dbReference type="ChEBI" id="CHEBI:30013"/>
        <dbReference type="ChEBI" id="CHEBI:30616"/>
        <dbReference type="ChEBI" id="CHEBI:61977"/>
        <dbReference type="ChEBI" id="CHEBI:456216"/>
        <dbReference type="EC" id="2.7.11.1"/>
    </reaction>
</comment>
<comment type="cofactor">
    <cofactor evidence="6">
        <name>Mn(2+)</name>
        <dbReference type="ChEBI" id="CHEBI:29035"/>
    </cofactor>
</comment>
<comment type="tissue specificity">
    <text evidence="6">Expressed in roots, leaf blades and sheaths and panicles.</text>
</comment>
<comment type="induction">
    <text evidence="6">By light, nutrient deprivation and N(6)-benzylaminopurine (BA).</text>
</comment>
<comment type="domain">
    <text evidence="1">The activation loop within the kinase domain is the target of phosphorylation/activation by upstream protein kinases. The PPI motif mediates the interaction with the ABI (abscisic acid-insensitive) phosphatases (By similarity).</text>
</comment>
<comment type="PTM">
    <text>Autophosphorylated.</text>
</comment>
<comment type="similarity">
    <text evidence="7">Belongs to the protein kinase superfamily. CAMK Ser/Thr protein kinase family. SNF1 subfamily.</text>
</comment>
<dbReference type="EC" id="2.7.11.1"/>
<dbReference type="EMBL" id="AB011967">
    <property type="protein sequence ID" value="BAA83688.1"/>
    <property type="molecule type" value="Genomic_DNA"/>
</dbReference>
<dbReference type="EMBL" id="AC132485">
    <property type="protein sequence ID" value="AAU03103.1"/>
    <property type="molecule type" value="Genomic_DNA"/>
</dbReference>
<dbReference type="EMBL" id="AP008211">
    <property type="protein sequence ID" value="BAF17946.1"/>
    <property type="molecule type" value="Genomic_DNA"/>
</dbReference>
<dbReference type="EMBL" id="AP014961">
    <property type="protein sequence ID" value="BAS94871.1"/>
    <property type="molecule type" value="Genomic_DNA"/>
</dbReference>
<dbReference type="EMBL" id="AK069486">
    <property type="protein sequence ID" value="BAG91459.1"/>
    <property type="molecule type" value="mRNA"/>
</dbReference>
<dbReference type="RefSeq" id="XP_015638753.1">
    <property type="nucleotide sequence ID" value="XM_015783267.1"/>
</dbReference>
<dbReference type="SMR" id="Q68Y49"/>
<dbReference type="FunCoup" id="Q68Y49">
    <property type="interactions" value="235"/>
</dbReference>
<dbReference type="STRING" id="39947.Q68Y49"/>
<dbReference type="PaxDb" id="39947-Q68Y49"/>
<dbReference type="EnsemblPlants" id="Os05t0514200-01">
    <property type="protein sequence ID" value="Os05t0514200-01"/>
    <property type="gene ID" value="Os05g0514200"/>
</dbReference>
<dbReference type="Gramene" id="Os05t0514200-01">
    <property type="protein sequence ID" value="Os05t0514200-01"/>
    <property type="gene ID" value="Os05g0514200"/>
</dbReference>
<dbReference type="KEGG" id="dosa:Os05g0514200"/>
<dbReference type="eggNOG" id="KOG0583">
    <property type="taxonomic scope" value="Eukaryota"/>
</dbReference>
<dbReference type="HOGENOM" id="CLU_000288_59_0_1"/>
<dbReference type="InParanoid" id="Q68Y49"/>
<dbReference type="OMA" id="HMGSVPN"/>
<dbReference type="OrthoDB" id="193931at2759"/>
<dbReference type="Proteomes" id="UP000000763">
    <property type="component" value="Chromosome 5"/>
</dbReference>
<dbReference type="Proteomes" id="UP000059680">
    <property type="component" value="Chromosome 5"/>
</dbReference>
<dbReference type="GO" id="GO:0005524">
    <property type="term" value="F:ATP binding"/>
    <property type="evidence" value="ECO:0007669"/>
    <property type="project" value="UniProtKB-KW"/>
</dbReference>
<dbReference type="GO" id="GO:0106310">
    <property type="term" value="F:protein serine kinase activity"/>
    <property type="evidence" value="ECO:0007669"/>
    <property type="project" value="RHEA"/>
</dbReference>
<dbReference type="GO" id="GO:0004674">
    <property type="term" value="F:protein serine/threonine kinase activity"/>
    <property type="evidence" value="ECO:0000318"/>
    <property type="project" value="GO_Central"/>
</dbReference>
<dbReference type="GO" id="GO:0007165">
    <property type="term" value="P:signal transduction"/>
    <property type="evidence" value="ECO:0000318"/>
    <property type="project" value="GO_Central"/>
</dbReference>
<dbReference type="CDD" id="cd12195">
    <property type="entry name" value="CIPK_C"/>
    <property type="match status" value="1"/>
</dbReference>
<dbReference type="CDD" id="cd14663">
    <property type="entry name" value="STKc_SnRK3"/>
    <property type="match status" value="1"/>
</dbReference>
<dbReference type="FunFam" id="1.10.510.10:FF:000653">
    <property type="entry name" value="Non-specific serine/threonine protein kinase"/>
    <property type="match status" value="1"/>
</dbReference>
<dbReference type="FunFam" id="3.30.200.20:FF:000096">
    <property type="entry name" value="Non-specific serine/threonine protein kinase"/>
    <property type="match status" value="1"/>
</dbReference>
<dbReference type="FunFam" id="3.30.310.80:FF:000005">
    <property type="entry name" value="Non-specific serine/threonine protein kinase"/>
    <property type="match status" value="1"/>
</dbReference>
<dbReference type="Gene3D" id="3.30.310.80">
    <property type="entry name" value="Kinase associated domain 1, KA1"/>
    <property type="match status" value="1"/>
</dbReference>
<dbReference type="Gene3D" id="1.10.510.10">
    <property type="entry name" value="Transferase(Phosphotransferase) domain 1"/>
    <property type="match status" value="1"/>
</dbReference>
<dbReference type="InterPro" id="IPR011009">
    <property type="entry name" value="Kinase-like_dom_sf"/>
</dbReference>
<dbReference type="InterPro" id="IPR018451">
    <property type="entry name" value="NAF/FISL_domain"/>
</dbReference>
<dbReference type="InterPro" id="IPR004041">
    <property type="entry name" value="NAF_dom"/>
</dbReference>
<dbReference type="InterPro" id="IPR000719">
    <property type="entry name" value="Prot_kinase_dom"/>
</dbReference>
<dbReference type="InterPro" id="IPR017441">
    <property type="entry name" value="Protein_kinase_ATP_BS"/>
</dbReference>
<dbReference type="InterPro" id="IPR008271">
    <property type="entry name" value="Ser/Thr_kinase_AS"/>
</dbReference>
<dbReference type="PANTHER" id="PTHR43895">
    <property type="entry name" value="CALCIUM/CALMODULIN-DEPENDENT PROTEIN KINASE KINASE-RELATED"/>
    <property type="match status" value="1"/>
</dbReference>
<dbReference type="PANTHER" id="PTHR43895:SF6">
    <property type="entry name" value="CBL-INTERACTING PROTEIN KINASE 19"/>
    <property type="match status" value="1"/>
</dbReference>
<dbReference type="Pfam" id="PF03822">
    <property type="entry name" value="NAF"/>
    <property type="match status" value="1"/>
</dbReference>
<dbReference type="Pfam" id="PF00069">
    <property type="entry name" value="Pkinase"/>
    <property type="match status" value="1"/>
</dbReference>
<dbReference type="SMART" id="SM00220">
    <property type="entry name" value="S_TKc"/>
    <property type="match status" value="1"/>
</dbReference>
<dbReference type="SUPFAM" id="SSF56112">
    <property type="entry name" value="Protein kinase-like (PK-like)"/>
    <property type="match status" value="1"/>
</dbReference>
<dbReference type="PROSITE" id="PS50816">
    <property type="entry name" value="NAF"/>
    <property type="match status" value="1"/>
</dbReference>
<dbReference type="PROSITE" id="PS00107">
    <property type="entry name" value="PROTEIN_KINASE_ATP"/>
    <property type="match status" value="1"/>
</dbReference>
<dbReference type="PROSITE" id="PS50011">
    <property type="entry name" value="PROTEIN_KINASE_DOM"/>
    <property type="match status" value="1"/>
</dbReference>
<dbReference type="PROSITE" id="PS00108">
    <property type="entry name" value="PROTEIN_KINASE_ST"/>
    <property type="match status" value="1"/>
</dbReference>
<proteinExistence type="evidence at protein level"/>
<evidence type="ECO:0000250" key="1"/>
<evidence type="ECO:0000255" key="2">
    <source>
        <dbReference type="PROSITE-ProRule" id="PRU00159"/>
    </source>
</evidence>
<evidence type="ECO:0000255" key="3">
    <source>
        <dbReference type="PROSITE-ProRule" id="PRU00256"/>
    </source>
</evidence>
<evidence type="ECO:0000255" key="4">
    <source>
        <dbReference type="PROSITE-ProRule" id="PRU10027"/>
    </source>
</evidence>
<evidence type="ECO:0000256" key="5">
    <source>
        <dbReference type="SAM" id="MobiDB-lite"/>
    </source>
</evidence>
<evidence type="ECO:0000269" key="6">
    <source>
    </source>
</evidence>
<evidence type="ECO:0000305" key="7"/>
<feature type="chain" id="PRO_0000338377" description="CBL-interacting protein kinase 19">
    <location>
        <begin position="1"/>
        <end position="508"/>
    </location>
</feature>
<feature type="domain" description="Protein kinase" evidence="2">
    <location>
        <begin position="37"/>
        <end position="291"/>
    </location>
</feature>
<feature type="domain" description="NAF" evidence="3">
    <location>
        <begin position="354"/>
        <end position="398"/>
    </location>
</feature>
<feature type="region of interest" description="Disordered" evidence="5">
    <location>
        <begin position="1"/>
        <end position="24"/>
    </location>
</feature>
<feature type="region of interest" description="Activation loop" evidence="1">
    <location>
        <begin position="177"/>
        <end position="206"/>
    </location>
</feature>
<feature type="region of interest" description="Disordered" evidence="5">
    <location>
        <begin position="311"/>
        <end position="372"/>
    </location>
</feature>
<feature type="region of interest" description="PPI" evidence="1">
    <location>
        <begin position="401"/>
        <end position="430"/>
    </location>
</feature>
<feature type="compositionally biased region" description="Low complexity" evidence="5">
    <location>
        <begin position="14"/>
        <end position="24"/>
    </location>
</feature>
<feature type="compositionally biased region" description="Acidic residues" evidence="5">
    <location>
        <begin position="313"/>
        <end position="322"/>
    </location>
</feature>
<feature type="compositionally biased region" description="Pro residues" evidence="5">
    <location>
        <begin position="323"/>
        <end position="337"/>
    </location>
</feature>
<feature type="compositionally biased region" description="Acidic residues" evidence="5">
    <location>
        <begin position="338"/>
        <end position="347"/>
    </location>
</feature>
<feature type="active site" description="Proton acceptor" evidence="2 4">
    <location>
        <position position="159"/>
    </location>
</feature>
<feature type="binding site" evidence="2">
    <location>
        <begin position="43"/>
        <end position="51"/>
    </location>
    <ligand>
        <name>ATP</name>
        <dbReference type="ChEBI" id="CHEBI:30616"/>
    </ligand>
</feature>
<feature type="binding site" evidence="2">
    <location>
        <position position="66"/>
    </location>
    <ligand>
        <name>ATP</name>
        <dbReference type="ChEBI" id="CHEBI:30616"/>
    </ligand>
</feature>
<feature type="mutagenesis site" description="Loss of kinase activity." evidence="6">
    <original>K</original>
    <variation>D</variation>
    <location>
        <position position="66"/>
    </location>
</feature>
<name>CIPKJ_ORYSJ</name>
<gene>
    <name type="primary">CIPK19</name>
    <name type="ordered locus">Os05g0514200</name>
    <name type="ordered locus">LOC_Os05g43840</name>
    <name type="ORF">P0022D06.5</name>
</gene>
<keyword id="KW-0067">ATP-binding</keyword>
<keyword id="KW-0418">Kinase</keyword>
<keyword id="KW-0464">Manganese</keyword>
<keyword id="KW-0547">Nucleotide-binding</keyword>
<keyword id="KW-1185">Reference proteome</keyword>
<keyword id="KW-0723">Serine/threonine-protein kinase</keyword>
<keyword id="KW-0808">Transferase</keyword>
<protein>
    <recommendedName>
        <fullName>CBL-interacting protein kinase 19</fullName>
        <ecNumber>2.7.11.1</ecNumber>
    </recommendedName>
    <alternativeName>
        <fullName>OsCIPK19</fullName>
    </alternativeName>
    <alternativeName>
        <fullName>OsPK4</fullName>
    </alternativeName>
</protein>
<accession>Q68Y49</accession>
<accession>B7EGG2</accession>
<accession>Q9SLZ6</accession>
<reference key="1">
    <citation type="journal article" date="2000" name="Mol. Gen. Genet.">
        <title>Diverse response of rice and maize genes encoding homologs of WPK4, an SNF1-related protein kinase from wheat, to light, nutrients, low temperature and cytokinins.</title>
        <authorList>
            <person name="Ohba H."/>
            <person name="Steward N."/>
            <person name="Kawasaki S."/>
            <person name="Berberich T."/>
            <person name="Ikeda Y."/>
            <person name="Koizumi N."/>
            <person name="Kusano T."/>
            <person name="Sano H."/>
        </authorList>
    </citation>
    <scope>NUCLEOTIDE SEQUENCE [GENOMIC DNA]</scope>
    <scope>COFACTOR</scope>
    <scope>TISSUE SPECIFICITY</scope>
    <scope>INDUCTION</scope>
    <scope>AUTOPHOSPHORYLATION</scope>
    <scope>MUTAGENESIS OF LYS-66</scope>
    <source>
        <strain>cv. Toride</strain>
    </source>
</reference>
<reference key="2">
    <citation type="journal article" date="2005" name="Mol. Genet. Genomics">
        <title>A fine physical map of the rice chromosome 5.</title>
        <authorList>
            <person name="Cheng C.-H."/>
            <person name="Chung M.C."/>
            <person name="Liu S.-M."/>
            <person name="Chen S.-K."/>
            <person name="Kao F.Y."/>
            <person name="Lin S.-J."/>
            <person name="Hsiao S.-H."/>
            <person name="Tseng I.C."/>
            <person name="Hsing Y.-I.C."/>
            <person name="Wu H.-P."/>
            <person name="Chen C.-S."/>
            <person name="Shaw J.-F."/>
            <person name="Wu J."/>
            <person name="Matsumoto T."/>
            <person name="Sasaki T."/>
            <person name="Chen H.-C."/>
            <person name="Chow T.-Y."/>
        </authorList>
    </citation>
    <scope>NUCLEOTIDE SEQUENCE [LARGE SCALE GENOMIC DNA]</scope>
    <source>
        <strain>cv. Nipponbare</strain>
    </source>
</reference>
<reference key="3">
    <citation type="journal article" date="2005" name="Nature">
        <title>The map-based sequence of the rice genome.</title>
        <authorList>
            <consortium name="International rice genome sequencing project (IRGSP)"/>
        </authorList>
    </citation>
    <scope>NUCLEOTIDE SEQUENCE [LARGE SCALE GENOMIC DNA]</scope>
    <source>
        <strain>cv. Nipponbare</strain>
    </source>
</reference>
<reference key="4">
    <citation type="journal article" date="2008" name="Nucleic Acids Res.">
        <title>The rice annotation project database (RAP-DB): 2008 update.</title>
        <authorList>
            <consortium name="The rice annotation project (RAP)"/>
        </authorList>
    </citation>
    <scope>GENOME REANNOTATION</scope>
    <source>
        <strain>cv. Nipponbare</strain>
    </source>
</reference>
<reference key="5">
    <citation type="journal article" date="2013" name="Rice">
        <title>Improvement of the Oryza sativa Nipponbare reference genome using next generation sequence and optical map data.</title>
        <authorList>
            <person name="Kawahara Y."/>
            <person name="de la Bastide M."/>
            <person name="Hamilton J.P."/>
            <person name="Kanamori H."/>
            <person name="McCombie W.R."/>
            <person name="Ouyang S."/>
            <person name="Schwartz D.C."/>
            <person name="Tanaka T."/>
            <person name="Wu J."/>
            <person name="Zhou S."/>
            <person name="Childs K.L."/>
            <person name="Davidson R.M."/>
            <person name="Lin H."/>
            <person name="Quesada-Ocampo L."/>
            <person name="Vaillancourt B."/>
            <person name="Sakai H."/>
            <person name="Lee S.S."/>
            <person name="Kim J."/>
            <person name="Numa H."/>
            <person name="Itoh T."/>
            <person name="Buell C.R."/>
            <person name="Matsumoto T."/>
        </authorList>
    </citation>
    <scope>GENOME REANNOTATION</scope>
    <source>
        <strain>cv. Nipponbare</strain>
    </source>
</reference>
<reference key="6">
    <citation type="journal article" date="2003" name="Science">
        <title>Collection, mapping, and annotation of over 28,000 cDNA clones from japonica rice.</title>
        <authorList>
            <consortium name="The rice full-length cDNA consortium"/>
        </authorList>
    </citation>
    <scope>NUCLEOTIDE SEQUENCE [LARGE SCALE MRNA]</scope>
    <source>
        <strain>cv. Nipponbare</strain>
    </source>
</reference>
<reference key="7">
    <citation type="journal article" date="2004" name="Plant Physiol.">
        <title>Calcium sensors and their interacting protein kinases: genomics of the Arabidopsis and rice CBL-CIPK signaling networks.</title>
        <authorList>
            <person name="Kolukisaoglu U."/>
            <person name="Weinl S."/>
            <person name="Blazevic D."/>
            <person name="Batistic O."/>
            <person name="Kudla J."/>
        </authorList>
    </citation>
    <scope>GENE FAMILY</scope>
    <scope>NOMENCLATURE</scope>
</reference>
<sequence length="508" mass="56913">MAATPPSSQHRRPLSSSASAASLAGKPRGGGLLLGRYELGRLLGHGTFAKVYQARSADSGEPVAIKVLDKEKAMRHGLVPHIKREIAILRRVRHPNIVRLFEVMATKSKIYFVMELVRGGELFGRVAKGRLKEDTARRYFQQLVSAVGFCHARGVFHRDLKPENLLVDEHGDLKVSDFGLSAVADQFHPDGLLHTFCGTPSYVAPEVLARRGYDGAKADIWSCGIILFVLMAGYLPFHDQNLMAMYRKIYRGEFRCPRWFSKDLSSLLNRILDTNPETRITVKEVMESRWFQKGFRPVRFYVEDDQVHSLADGDNDMPELEPSEPPPPPPFPPPPPQQDDDGEESGWESDSSVASCPATLSSEERRQRPLGSLTRPASLNAFDIISFSKGFDLSGLFEERGSEVRFISAEPMQTIITKLEEIAKVKSFFVRRKDWRVSIEGTREGLKGPLTIGAEIFELTPSLVVVEVKKKAGDKEEYDDFCNRELKPGMQHLVHHMGSVPNIPSDTE</sequence>
<organism>
    <name type="scientific">Oryza sativa subsp. japonica</name>
    <name type="common">Rice</name>
    <dbReference type="NCBI Taxonomy" id="39947"/>
    <lineage>
        <taxon>Eukaryota</taxon>
        <taxon>Viridiplantae</taxon>
        <taxon>Streptophyta</taxon>
        <taxon>Embryophyta</taxon>
        <taxon>Tracheophyta</taxon>
        <taxon>Spermatophyta</taxon>
        <taxon>Magnoliopsida</taxon>
        <taxon>Liliopsida</taxon>
        <taxon>Poales</taxon>
        <taxon>Poaceae</taxon>
        <taxon>BOP clade</taxon>
        <taxon>Oryzoideae</taxon>
        <taxon>Oryzeae</taxon>
        <taxon>Oryzinae</taxon>
        <taxon>Oryza</taxon>
        <taxon>Oryza sativa</taxon>
    </lineage>
</organism>